<reference key="1">
    <citation type="journal article" date="2004" name="Genome Res.">
        <title>The status, quality, and expansion of the NIH full-length cDNA project: the Mammalian Gene Collection (MGC).</title>
        <authorList>
            <consortium name="The MGC Project Team"/>
        </authorList>
    </citation>
    <scope>NUCLEOTIDE SEQUENCE [LARGE SCALE MRNA]</scope>
    <source>
        <strain>FVB/N</strain>
        <tissue>Mammary tumor</tissue>
    </source>
</reference>
<dbReference type="EMBL" id="BC003322">
    <property type="protein sequence ID" value="AAH03322.1"/>
    <property type="molecule type" value="mRNA"/>
</dbReference>
<dbReference type="CCDS" id="CCDS26660.1"/>
<dbReference type="RefSeq" id="NP_084533.1">
    <property type="nucleotide sequence ID" value="NM_030257.1"/>
</dbReference>
<dbReference type="RefSeq" id="XP_006517538.1">
    <property type="nucleotide sequence ID" value="XM_006517475.4"/>
</dbReference>
<dbReference type="BioGRID" id="219777">
    <property type="interactions" value="1"/>
</dbReference>
<dbReference type="FunCoup" id="Q99LE3">
    <property type="interactions" value="2226"/>
</dbReference>
<dbReference type="STRING" id="10090.ENSMUSP00000152940"/>
<dbReference type="GlyCosmos" id="Q99LE3">
    <property type="glycosylation" value="3 sites, No reported glycans"/>
</dbReference>
<dbReference type="GlyGen" id="Q99LE3">
    <property type="glycosylation" value="4 sites"/>
</dbReference>
<dbReference type="iPTMnet" id="Q99LE3"/>
<dbReference type="PhosphoSitePlus" id="Q99LE3"/>
<dbReference type="jPOST" id="Q99LE3"/>
<dbReference type="PaxDb" id="10090-ENSMUSP00000038275"/>
<dbReference type="PeptideAtlas" id="Q99LE3"/>
<dbReference type="ProteomicsDB" id="292155"/>
<dbReference type="Antibodypedia" id="2640">
    <property type="antibodies" value="48 antibodies from 16 providers"/>
</dbReference>
<dbReference type="DNASU" id="80289"/>
<dbReference type="Ensembl" id="ENSMUST00000224300.2">
    <property type="protein sequence ID" value="ENSMUSP00000152940.2"/>
    <property type="gene ID" value="ENSMUSG00000035840.8"/>
</dbReference>
<dbReference type="GeneID" id="80289"/>
<dbReference type="KEGG" id="mmu:80289"/>
<dbReference type="UCSC" id="uc007rhw.1">
    <property type="organism name" value="mouse"/>
</dbReference>
<dbReference type="AGR" id="MGI:1915906"/>
<dbReference type="CTD" id="116068"/>
<dbReference type="MGI" id="MGI:1915906">
    <property type="gene designation" value="Lysmd3"/>
</dbReference>
<dbReference type="VEuPathDB" id="HostDB:ENSMUSG00000035840"/>
<dbReference type="eggNOG" id="KOG2850">
    <property type="taxonomic scope" value="Eukaryota"/>
</dbReference>
<dbReference type="GeneTree" id="ENSGT00940000158711"/>
<dbReference type="HOGENOM" id="CLU_070676_0_0_1"/>
<dbReference type="InParanoid" id="Q99LE3"/>
<dbReference type="OMA" id="IALQFCC"/>
<dbReference type="OrthoDB" id="538216at2759"/>
<dbReference type="PhylomeDB" id="Q99LE3"/>
<dbReference type="TreeFam" id="TF326271"/>
<dbReference type="BioGRID-ORCS" id="80289">
    <property type="hits" value="3 hits in 79 CRISPR screens"/>
</dbReference>
<dbReference type="ChiTaRS" id="Lysmd3">
    <property type="organism name" value="mouse"/>
</dbReference>
<dbReference type="PRO" id="PR:Q99LE3"/>
<dbReference type="Proteomes" id="UP000000589">
    <property type="component" value="Chromosome 13"/>
</dbReference>
<dbReference type="RNAct" id="Q99LE3">
    <property type="molecule type" value="protein"/>
</dbReference>
<dbReference type="Bgee" id="ENSMUSG00000035840">
    <property type="expression patterns" value="Expressed in humerus cartilage element and 250 other cell types or tissues"/>
</dbReference>
<dbReference type="ExpressionAtlas" id="Q99LE3">
    <property type="expression patterns" value="baseline and differential"/>
</dbReference>
<dbReference type="GO" id="GO:0005794">
    <property type="term" value="C:Golgi apparatus"/>
    <property type="evidence" value="ECO:0000250"/>
    <property type="project" value="UniProtKB"/>
</dbReference>
<dbReference type="GO" id="GO:0000139">
    <property type="term" value="C:Golgi membrane"/>
    <property type="evidence" value="ECO:0007669"/>
    <property type="project" value="Ensembl"/>
</dbReference>
<dbReference type="GO" id="GO:0005886">
    <property type="term" value="C:plasma membrane"/>
    <property type="evidence" value="ECO:0000250"/>
    <property type="project" value="UniProtKB"/>
</dbReference>
<dbReference type="GO" id="GO:0042834">
    <property type="term" value="F:peptidoglycan binding"/>
    <property type="evidence" value="ECO:0007669"/>
    <property type="project" value="Ensembl"/>
</dbReference>
<dbReference type="GO" id="GO:0007030">
    <property type="term" value="P:Golgi organization"/>
    <property type="evidence" value="ECO:0000250"/>
    <property type="project" value="UniProtKB"/>
</dbReference>
<dbReference type="CDD" id="cd00118">
    <property type="entry name" value="LysM"/>
    <property type="match status" value="1"/>
</dbReference>
<dbReference type="Gene3D" id="3.10.350.10">
    <property type="entry name" value="LysM domain"/>
    <property type="match status" value="1"/>
</dbReference>
<dbReference type="InterPro" id="IPR045030">
    <property type="entry name" value="LYSM1-4"/>
</dbReference>
<dbReference type="InterPro" id="IPR018392">
    <property type="entry name" value="LysM_dom"/>
</dbReference>
<dbReference type="InterPro" id="IPR036779">
    <property type="entry name" value="LysM_dom_sf"/>
</dbReference>
<dbReference type="PANTHER" id="PTHR20932:SF5">
    <property type="entry name" value="AND PUTATIVE PEPTIDOGLYCAN-BINDING DOMAIN-CONTAINING PROTEIN 3-RELATED"/>
    <property type="match status" value="1"/>
</dbReference>
<dbReference type="PANTHER" id="PTHR20932">
    <property type="entry name" value="LYSM AND PUTATIVE PEPTIDOGLYCAN-BINDING DOMAIN-CONTAINING PROTEIN"/>
    <property type="match status" value="1"/>
</dbReference>
<dbReference type="Pfam" id="PF01476">
    <property type="entry name" value="LysM"/>
    <property type="match status" value="1"/>
</dbReference>
<dbReference type="SMART" id="SM00257">
    <property type="entry name" value="LysM"/>
    <property type="match status" value="1"/>
</dbReference>
<dbReference type="PROSITE" id="PS51782">
    <property type="entry name" value="LYSM"/>
    <property type="match status" value="1"/>
</dbReference>
<name>LYSM3_MOUSE</name>
<protein>
    <recommendedName>
        <fullName>LysM and putative peptidoglycan-binding domain-containing protein 3</fullName>
    </recommendedName>
</protein>
<keyword id="KW-1003">Cell membrane</keyword>
<keyword id="KW-0325">Glycoprotein</keyword>
<keyword id="KW-0333">Golgi apparatus</keyword>
<keyword id="KW-0472">Membrane</keyword>
<keyword id="KW-0597">Phosphoprotein</keyword>
<keyword id="KW-1185">Reference proteome</keyword>
<keyword id="KW-0812">Transmembrane</keyword>
<keyword id="KW-1133">Transmembrane helix</keyword>
<feature type="chain" id="PRO_0000248008" description="LysM and putative peptidoglycan-binding domain-containing protein 3">
    <location>
        <begin position="1"/>
        <end position="305"/>
    </location>
</feature>
<feature type="topological domain" description="Extracellular" evidence="2">
    <location>
        <begin position="1"/>
        <end position="216"/>
    </location>
</feature>
<feature type="transmembrane region" description="Helical" evidence="2">
    <location>
        <begin position="217"/>
        <end position="237"/>
    </location>
</feature>
<feature type="topological domain" description="Cytoplasmic" evidence="2">
    <location>
        <begin position="238"/>
        <end position="305"/>
    </location>
</feature>
<feature type="domain" description="LysM" evidence="3">
    <location>
        <begin position="65"/>
        <end position="109"/>
    </location>
</feature>
<feature type="region of interest" description="Disordered" evidence="4">
    <location>
        <begin position="253"/>
        <end position="305"/>
    </location>
</feature>
<feature type="compositionally biased region" description="Basic and acidic residues" evidence="4">
    <location>
        <begin position="286"/>
        <end position="305"/>
    </location>
</feature>
<feature type="modified residue" description="Phosphoserine" evidence="1">
    <location>
        <position position="55"/>
    </location>
</feature>
<feature type="glycosylation site" description="N-linked (GlcNAc...) asparagine" evidence="2">
    <location>
        <position position="7"/>
    </location>
</feature>
<feature type="glycosylation site" description="N-linked (GlcNAc...) asparagine" evidence="2">
    <location>
        <position position="26"/>
    </location>
</feature>
<feature type="glycosylation site" description="N-linked (GlcNAc...) asparagine" evidence="2">
    <location>
        <position position="199"/>
    </location>
</feature>
<gene>
    <name type="primary">Lysmd3</name>
</gene>
<proteinExistence type="evidence at transcript level"/>
<accession>Q99LE3</accession>
<comment type="function">
    <text evidence="1">Essential for Golgi structural integrity.</text>
</comment>
<comment type="subcellular location">
    <subcellularLocation>
        <location evidence="1">Cell membrane</location>
        <topology evidence="2">Single-pass membrane protein</topology>
    </subcellularLocation>
    <subcellularLocation>
        <location evidence="1">Golgi apparatus</location>
    </subcellularLocation>
</comment>
<sequence>MAGRNQNRTVSLPGIQASGHVLAFGNCTDNDMLEEDAEVYELRSRGKEKVRRSASRDRLDDIVILTKDIQEGDTLNAVALQYCCTVADIKRVNNLISDQDFFALRSIKIPVKRFSSLTETLHPLKGRHILHPPPVPYFQEQDIVPADGSLSSSESAGSFLKEVDRDIEQIVKCTDTKKENLNEVVSALTAQQVRFEPDNKSIHRKDPYYGADWGIGWWTAVVIMLIVGIITPVFYLLYYEILAKVDVSHHSTVGSSHLHPGLTPPTQHREMENEIGPTKGIPVGQQDDHKLYRQDPQAHDAQHKT</sequence>
<evidence type="ECO:0000250" key="1">
    <source>
        <dbReference type="UniProtKB" id="Q7Z3D4"/>
    </source>
</evidence>
<evidence type="ECO:0000255" key="2"/>
<evidence type="ECO:0000255" key="3">
    <source>
        <dbReference type="PROSITE-ProRule" id="PRU01118"/>
    </source>
</evidence>
<evidence type="ECO:0000256" key="4">
    <source>
        <dbReference type="SAM" id="MobiDB-lite"/>
    </source>
</evidence>
<organism>
    <name type="scientific">Mus musculus</name>
    <name type="common">Mouse</name>
    <dbReference type="NCBI Taxonomy" id="10090"/>
    <lineage>
        <taxon>Eukaryota</taxon>
        <taxon>Metazoa</taxon>
        <taxon>Chordata</taxon>
        <taxon>Craniata</taxon>
        <taxon>Vertebrata</taxon>
        <taxon>Euteleostomi</taxon>
        <taxon>Mammalia</taxon>
        <taxon>Eutheria</taxon>
        <taxon>Euarchontoglires</taxon>
        <taxon>Glires</taxon>
        <taxon>Rodentia</taxon>
        <taxon>Myomorpha</taxon>
        <taxon>Muroidea</taxon>
        <taxon>Muridae</taxon>
        <taxon>Murinae</taxon>
        <taxon>Mus</taxon>
        <taxon>Mus</taxon>
    </lineage>
</organism>